<reference evidence="18" key="1">
    <citation type="journal article" date="2000" name="Science">
        <title>The genome sequence of Drosophila melanogaster.</title>
        <authorList>
            <person name="Adams M.D."/>
            <person name="Celniker S.E."/>
            <person name="Holt R.A."/>
            <person name="Evans C.A."/>
            <person name="Gocayne J.D."/>
            <person name="Amanatides P.G."/>
            <person name="Scherer S.E."/>
            <person name="Li P.W."/>
            <person name="Hoskins R.A."/>
            <person name="Galle R.F."/>
            <person name="George R.A."/>
            <person name="Lewis S.E."/>
            <person name="Richards S."/>
            <person name="Ashburner M."/>
            <person name="Henderson S.N."/>
            <person name="Sutton G.G."/>
            <person name="Wortman J.R."/>
            <person name="Yandell M.D."/>
            <person name="Zhang Q."/>
            <person name="Chen L.X."/>
            <person name="Brandon R.C."/>
            <person name="Rogers Y.-H.C."/>
            <person name="Blazej R.G."/>
            <person name="Champe M."/>
            <person name="Pfeiffer B.D."/>
            <person name="Wan K.H."/>
            <person name="Doyle C."/>
            <person name="Baxter E.G."/>
            <person name="Helt G."/>
            <person name="Nelson C.R."/>
            <person name="Miklos G.L.G."/>
            <person name="Abril J.F."/>
            <person name="Agbayani A."/>
            <person name="An H.-J."/>
            <person name="Andrews-Pfannkoch C."/>
            <person name="Baldwin D."/>
            <person name="Ballew R.M."/>
            <person name="Basu A."/>
            <person name="Baxendale J."/>
            <person name="Bayraktaroglu L."/>
            <person name="Beasley E.M."/>
            <person name="Beeson K.Y."/>
            <person name="Benos P.V."/>
            <person name="Berman B.P."/>
            <person name="Bhandari D."/>
            <person name="Bolshakov S."/>
            <person name="Borkova D."/>
            <person name="Botchan M.R."/>
            <person name="Bouck J."/>
            <person name="Brokstein P."/>
            <person name="Brottier P."/>
            <person name="Burtis K.C."/>
            <person name="Busam D.A."/>
            <person name="Butler H."/>
            <person name="Cadieu E."/>
            <person name="Center A."/>
            <person name="Chandra I."/>
            <person name="Cherry J.M."/>
            <person name="Cawley S."/>
            <person name="Dahlke C."/>
            <person name="Davenport L.B."/>
            <person name="Davies P."/>
            <person name="de Pablos B."/>
            <person name="Delcher A."/>
            <person name="Deng Z."/>
            <person name="Mays A.D."/>
            <person name="Dew I."/>
            <person name="Dietz S.M."/>
            <person name="Dodson K."/>
            <person name="Doup L.E."/>
            <person name="Downes M."/>
            <person name="Dugan-Rocha S."/>
            <person name="Dunkov B.C."/>
            <person name="Dunn P."/>
            <person name="Durbin K.J."/>
            <person name="Evangelista C.C."/>
            <person name="Ferraz C."/>
            <person name="Ferriera S."/>
            <person name="Fleischmann W."/>
            <person name="Fosler C."/>
            <person name="Gabrielian A.E."/>
            <person name="Garg N.S."/>
            <person name="Gelbart W.M."/>
            <person name="Glasser K."/>
            <person name="Glodek A."/>
            <person name="Gong F."/>
            <person name="Gorrell J.H."/>
            <person name="Gu Z."/>
            <person name="Guan P."/>
            <person name="Harris M."/>
            <person name="Harris N.L."/>
            <person name="Harvey D.A."/>
            <person name="Heiman T.J."/>
            <person name="Hernandez J.R."/>
            <person name="Houck J."/>
            <person name="Hostin D."/>
            <person name="Houston K.A."/>
            <person name="Howland T.J."/>
            <person name="Wei M.-H."/>
            <person name="Ibegwam C."/>
            <person name="Jalali M."/>
            <person name="Kalush F."/>
            <person name="Karpen G.H."/>
            <person name="Ke Z."/>
            <person name="Kennison J.A."/>
            <person name="Ketchum K.A."/>
            <person name="Kimmel B.E."/>
            <person name="Kodira C.D."/>
            <person name="Kraft C.L."/>
            <person name="Kravitz S."/>
            <person name="Kulp D."/>
            <person name="Lai Z."/>
            <person name="Lasko P."/>
            <person name="Lei Y."/>
            <person name="Levitsky A.A."/>
            <person name="Li J.H."/>
            <person name="Li Z."/>
            <person name="Liang Y."/>
            <person name="Lin X."/>
            <person name="Liu X."/>
            <person name="Mattei B."/>
            <person name="McIntosh T.C."/>
            <person name="McLeod M.P."/>
            <person name="McPherson D."/>
            <person name="Merkulov G."/>
            <person name="Milshina N.V."/>
            <person name="Mobarry C."/>
            <person name="Morris J."/>
            <person name="Moshrefi A."/>
            <person name="Mount S.M."/>
            <person name="Moy M."/>
            <person name="Murphy B."/>
            <person name="Murphy L."/>
            <person name="Muzny D.M."/>
            <person name="Nelson D.L."/>
            <person name="Nelson D.R."/>
            <person name="Nelson K.A."/>
            <person name="Nixon K."/>
            <person name="Nusskern D.R."/>
            <person name="Pacleb J.M."/>
            <person name="Palazzolo M."/>
            <person name="Pittman G.S."/>
            <person name="Pan S."/>
            <person name="Pollard J."/>
            <person name="Puri V."/>
            <person name="Reese M.G."/>
            <person name="Reinert K."/>
            <person name="Remington K."/>
            <person name="Saunders R.D.C."/>
            <person name="Scheeler F."/>
            <person name="Shen H."/>
            <person name="Shue B.C."/>
            <person name="Siden-Kiamos I."/>
            <person name="Simpson M."/>
            <person name="Skupski M.P."/>
            <person name="Smith T.J."/>
            <person name="Spier E."/>
            <person name="Spradling A.C."/>
            <person name="Stapleton M."/>
            <person name="Strong R."/>
            <person name="Sun E."/>
            <person name="Svirskas R."/>
            <person name="Tector C."/>
            <person name="Turner R."/>
            <person name="Venter E."/>
            <person name="Wang A.H."/>
            <person name="Wang X."/>
            <person name="Wang Z.-Y."/>
            <person name="Wassarman D.A."/>
            <person name="Weinstock G.M."/>
            <person name="Weissenbach J."/>
            <person name="Williams S.M."/>
            <person name="Woodage T."/>
            <person name="Worley K.C."/>
            <person name="Wu D."/>
            <person name="Yang S."/>
            <person name="Yao Q.A."/>
            <person name="Ye J."/>
            <person name="Yeh R.-F."/>
            <person name="Zaveri J.S."/>
            <person name="Zhan M."/>
            <person name="Zhang G."/>
            <person name="Zhao Q."/>
            <person name="Zheng L."/>
            <person name="Zheng X.H."/>
            <person name="Zhong F.N."/>
            <person name="Zhong W."/>
            <person name="Zhou X."/>
            <person name="Zhu S.C."/>
            <person name="Zhu X."/>
            <person name="Smith H.O."/>
            <person name="Gibbs R.A."/>
            <person name="Myers E.W."/>
            <person name="Rubin G.M."/>
            <person name="Venter J.C."/>
        </authorList>
    </citation>
    <scope>NUCLEOTIDE SEQUENCE [LARGE SCALE GENOMIC DNA]</scope>
    <source>
        <strain evidence="18">Berkeley</strain>
    </source>
</reference>
<reference evidence="18" key="2">
    <citation type="journal article" date="2002" name="Genome Biol.">
        <title>Annotation of the Drosophila melanogaster euchromatic genome: a systematic review.</title>
        <authorList>
            <person name="Misra S."/>
            <person name="Crosby M.A."/>
            <person name="Mungall C.J."/>
            <person name="Matthews B.B."/>
            <person name="Campbell K.S."/>
            <person name="Hradecky P."/>
            <person name="Huang Y."/>
            <person name="Kaminker J.S."/>
            <person name="Millburn G.H."/>
            <person name="Prochnik S.E."/>
            <person name="Smith C.D."/>
            <person name="Tupy J.L."/>
            <person name="Whitfield E.J."/>
            <person name="Bayraktaroglu L."/>
            <person name="Berman B.P."/>
            <person name="Bettencourt B.R."/>
            <person name="Celniker S.E."/>
            <person name="de Grey A.D.N.J."/>
            <person name="Drysdale R.A."/>
            <person name="Harris N.L."/>
            <person name="Richter J."/>
            <person name="Russo S."/>
            <person name="Schroeder A.J."/>
            <person name="Shu S.Q."/>
            <person name="Stapleton M."/>
            <person name="Yamada C."/>
            <person name="Ashburner M."/>
            <person name="Gelbart W.M."/>
            <person name="Rubin G.M."/>
            <person name="Lewis S.E."/>
        </authorList>
    </citation>
    <scope>GENOME REANNOTATION</scope>
    <source>
        <strain evidence="18">Berkeley</strain>
    </source>
</reference>
<reference evidence="15" key="3">
    <citation type="journal article" date="2000" name="Science">
        <title>A Drosophila complementary DNA resource.</title>
        <authorList>
            <person name="Rubin G.M."/>
            <person name="Hong L."/>
            <person name="Brokstein P."/>
            <person name="Evans-Holm M."/>
            <person name="Frise E."/>
            <person name="Stapleton M."/>
            <person name="Harvey D.A."/>
        </authorList>
    </citation>
    <scope>NUCLEOTIDE SEQUENCE [LARGE SCALE MRNA] (ISOFORM A)</scope>
    <source>
        <strain evidence="15">Berkeley</strain>
        <tissue evidence="15">Head</tissue>
    </source>
</reference>
<reference evidence="16" key="4">
    <citation type="submission" date="2011-02" db="EMBL/GenBank/DDBJ databases">
        <authorList>
            <person name="Carlson J."/>
            <person name="Booth B."/>
            <person name="Frise E."/>
            <person name="Park S."/>
            <person name="Wan K."/>
            <person name="Yu C."/>
            <person name="Celniker S."/>
        </authorList>
    </citation>
    <scope>NUCLEOTIDE SEQUENCE [LARGE SCALE MRNA] OF 96-400</scope>
    <source>
        <strain evidence="16">Berkeley</strain>
        <tissue evidence="16">Head</tissue>
    </source>
</reference>
<reference evidence="13" key="5">
    <citation type="journal article" date="2006" name="J. Biol. Chem.">
        <title>Two proteases defining a melanization cascade in the immune system of Drosophila.</title>
        <authorList>
            <person name="Tang H."/>
            <person name="Kambris Z."/>
            <person name="Lemaitre B."/>
            <person name="Hashimoto C."/>
        </authorList>
    </citation>
    <scope>FUNCTION</scope>
    <scope>CATALYTIC ACTIVITY</scope>
    <scope>DISRUPTION PHENOTYPE</scope>
</reference>
<reference evidence="13" key="6">
    <citation type="journal article" date="2008" name="Dev. Cell">
        <title>A serpin that regulates immune melanization in the respiratory system of Drosophila.</title>
        <authorList>
            <person name="Tang H."/>
            <person name="Kambris Z."/>
            <person name="Lemaitre B."/>
            <person name="Hashimoto C."/>
        </authorList>
    </citation>
    <scope>FUNCTION</scope>
</reference>
<reference evidence="13" key="7">
    <citation type="journal article" date="2012" name="EMBO J.">
        <title>Genetic evidence of a redox-dependent systemic wound response via Hayan protease-phenoloxidase system in Drosophila.</title>
        <authorList>
            <person name="Nam H.J."/>
            <person name="Jang I.H."/>
            <person name="You H."/>
            <person name="Lee K.A."/>
            <person name="Lee W.J."/>
        </authorList>
    </citation>
    <scope>DISRUPTION PHENOTYPE</scope>
</reference>
<keyword id="KW-0025">Alternative splicing</keyword>
<keyword id="KW-0106">Calcium</keyword>
<keyword id="KW-1015">Disulfide bond</keyword>
<keyword id="KW-0325">Glycoprotein</keyword>
<keyword id="KW-0378">Hydrolase</keyword>
<keyword id="KW-0479">Metal-binding</keyword>
<keyword id="KW-0645">Protease</keyword>
<keyword id="KW-1185">Reference proteome</keyword>
<keyword id="KW-0720">Serine protease</keyword>
<keyword id="KW-0732">Signal</keyword>
<keyword id="KW-0865">Zymogen</keyword>
<organism evidence="18">
    <name type="scientific">Drosophila melanogaster</name>
    <name type="common">Fruit fly</name>
    <dbReference type="NCBI Taxonomy" id="7227"/>
    <lineage>
        <taxon>Eukaryota</taxon>
        <taxon>Metazoa</taxon>
        <taxon>Ecdysozoa</taxon>
        <taxon>Arthropoda</taxon>
        <taxon>Hexapoda</taxon>
        <taxon>Insecta</taxon>
        <taxon>Pterygota</taxon>
        <taxon>Neoptera</taxon>
        <taxon>Endopterygota</taxon>
        <taxon>Diptera</taxon>
        <taxon>Brachycera</taxon>
        <taxon>Muscomorpha</taxon>
        <taxon>Ephydroidea</taxon>
        <taxon>Drosophilidae</taxon>
        <taxon>Drosophila</taxon>
        <taxon>Sophophora</taxon>
    </lineage>
</organism>
<name>MP1_DROME</name>
<protein>
    <recommendedName>
        <fullName evidence="12">Melanization protease 1</fullName>
        <ecNumber evidence="14">3.4.21.-</ecNumber>
    </recommendedName>
</protein>
<feature type="signal peptide" evidence="4">
    <location>
        <begin position="1"/>
        <end position="22"/>
    </location>
</feature>
<feature type="propeptide" id="PRO_0000438112" description="Activation peptide" evidence="2">
    <location>
        <begin position="23"/>
        <end position="137"/>
    </location>
</feature>
<feature type="chain" id="PRO_5007270038" description="Melanization protease 1" evidence="13">
    <location>
        <begin position="138"/>
        <end position="400"/>
    </location>
</feature>
<feature type="domain" description="Clip" evidence="7">
    <location>
        <begin position="28"/>
        <end position="91"/>
    </location>
</feature>
<feature type="domain" description="Peptidase S1" evidence="5">
    <location>
        <begin position="138"/>
        <end position="399"/>
    </location>
</feature>
<feature type="region of interest" description="Disordered" evidence="8">
    <location>
        <begin position="98"/>
        <end position="120"/>
    </location>
</feature>
<feature type="active site" description="Charge relay system" evidence="5">
    <location>
        <position position="183"/>
    </location>
</feature>
<feature type="active site" description="Charge relay system" evidence="5">
    <location>
        <position position="248"/>
    </location>
</feature>
<feature type="active site" description="Charge relay system" evidence="5">
    <location>
        <position position="346"/>
    </location>
</feature>
<feature type="binding site" evidence="1">
    <location>
        <position position="201"/>
    </location>
    <ligand>
        <name>Ca(2+)</name>
        <dbReference type="ChEBI" id="CHEBI:29108"/>
    </ligand>
</feature>
<feature type="binding site" evidence="1">
    <location>
        <position position="203"/>
    </location>
    <ligand>
        <name>Ca(2+)</name>
        <dbReference type="ChEBI" id="CHEBI:29108"/>
    </ligand>
</feature>
<feature type="binding site" evidence="1">
    <location>
        <position position="206"/>
    </location>
    <ligand>
        <name>Ca(2+)</name>
        <dbReference type="ChEBI" id="CHEBI:29108"/>
    </ligand>
</feature>
<feature type="binding site" evidence="1">
    <location>
        <position position="209"/>
    </location>
    <ligand>
        <name>Ca(2+)</name>
        <dbReference type="ChEBI" id="CHEBI:29108"/>
    </ligand>
</feature>
<feature type="glycosylation site" description="N-linked (GlcNAc...) asparagine" evidence="6">
    <location>
        <position position="142"/>
    </location>
</feature>
<feature type="glycosylation site" description="N-linked (GlcNAc...) asparagine" evidence="6">
    <location>
        <position position="296"/>
    </location>
</feature>
<feature type="disulfide bond" evidence="7">
    <location>
        <begin position="29"/>
        <end position="90"/>
    </location>
</feature>
<feature type="disulfide bond" evidence="7">
    <location>
        <begin position="39"/>
        <end position="70"/>
    </location>
</feature>
<feature type="disulfide bond" evidence="7">
    <location>
        <begin position="45"/>
        <end position="91"/>
    </location>
</feature>
<feature type="disulfide bond" evidence="3">
    <location>
        <begin position="130"/>
        <end position="268"/>
    </location>
</feature>
<feature type="disulfide bond" evidence="5">
    <location>
        <begin position="168"/>
        <end position="184"/>
    </location>
</feature>
<feature type="disulfide bond" evidence="3">
    <location>
        <begin position="210"/>
        <end position="220"/>
    </location>
</feature>
<feature type="disulfide bond" evidence="5">
    <location>
        <begin position="315"/>
        <end position="332"/>
    </location>
</feature>
<feature type="disulfide bond" evidence="5">
    <location>
        <begin position="342"/>
        <end position="375"/>
    </location>
</feature>
<feature type="splice variant" id="VSP_058613" description="In isoform A." evidence="13">
    <location>
        <begin position="79"/>
        <end position="88"/>
    </location>
</feature>
<feature type="splice variant" id="VSP_058614" description="In isoform C." evidence="13">
    <original>EKHFCFTNVQ</original>
    <variation>VSTPLKSCG</variation>
    <location>
        <begin position="79"/>
        <end position="88"/>
    </location>
</feature>
<comment type="function">
    <text evidence="9 10">Serine protease which plays an essential role in the melanization immune response by acting downstream of sp7 to activate prophenoloxidase (PPO1) (PubMed:16861233). May function in diverse Hayan-dependent PPO1-activating cascades that are negatively controlled by different serpin proteins; Spn27A in the hemolymph and Spn77BA in the trachea (PubMed:16861233, PubMed:18854145). Regulation of melanization and PPO1 activation appears to be largely independent of the Toll signaling pathway (PubMed:16861233).</text>
</comment>
<comment type="alternative products">
    <event type="alternative splicing"/>
    <isoform>
        <id>A0A126GUP6-1</id>
        <name evidence="17">E</name>
        <sequence type="displayed"/>
    </isoform>
    <isoform>
        <id>A0A126GUP6-2</id>
        <name evidence="17">A</name>
        <sequence type="described" ref="VSP_058613"/>
    </isoform>
    <isoform>
        <id>A0A126GUP6-3</id>
        <name evidence="17">C</name>
        <sequence type="described" ref="VSP_058614"/>
    </isoform>
</comment>
<comment type="domain">
    <text evidence="7">The clip domain consists of 35-55 residues which are 'knitted' together usually by 3 conserved disulfide bonds forming a clip-like compact structure.</text>
</comment>
<comment type="disruption phenotype">
    <text evidence="9 11">RNAi-mediated knockdown is semi-pupal lethal, with 50% of pupae dying at the late pupal stage or during eclosion (PubMed:16861233). Adults display impaired melanization at the site of septic infection (septic injury) using either Gram-negative (E.coli) or Gram-positive bacteria (M.luteus) (PubMed:16861233). No significant increase in PPO1 activity after septic injury using fungi (B.bassiana) and bacteria (PubMed:16861233). Survival and induction of antimicrobial peptides (Dpt and Drs) is not affected after bacterial or fungal infection (PubMed:16861233). Aseptic wounding has no effect on survival (PubMed:22227521).</text>
</comment>
<comment type="similarity">
    <text evidence="7">Belongs to the peptidase S1 family. CLIP subfamily.</text>
</comment>
<dbReference type="EC" id="3.4.21.-" evidence="14"/>
<dbReference type="EMBL" id="AE014297">
    <property type="protein sequence ID" value="AAF52151.3"/>
    <property type="molecule type" value="Genomic_DNA"/>
</dbReference>
<dbReference type="EMBL" id="AE014297">
    <property type="protein sequence ID" value="AAN13300.2"/>
    <property type="molecule type" value="Genomic_DNA"/>
</dbReference>
<dbReference type="EMBL" id="AE014297">
    <property type="protein sequence ID" value="ALI30526.1"/>
    <property type="molecule type" value="Genomic_DNA"/>
</dbReference>
<dbReference type="EMBL" id="AF145611">
    <property type="protein sequence ID" value="AAD38586.1"/>
    <property type="molecule type" value="mRNA"/>
</dbReference>
<dbReference type="EMBL" id="BT125977">
    <property type="protein sequence ID" value="ADX35956.1"/>
    <property type="molecule type" value="mRNA"/>
</dbReference>
<dbReference type="RefSeq" id="NP_001138002.1">
    <molecule id="A0A126GUP6-3"/>
    <property type="nucleotide sequence ID" value="NM_001144530.2"/>
</dbReference>
<dbReference type="RefSeq" id="NP_001303421.1">
    <molecule id="A0A126GUP6-1"/>
    <property type="nucleotide sequence ID" value="NM_001316492.1"/>
</dbReference>
<dbReference type="RefSeq" id="NP_649450.3">
    <molecule id="A0A126GUP6-2"/>
    <property type="nucleotide sequence ID" value="NM_141193.4"/>
</dbReference>
<dbReference type="SMR" id="A0A126GUP6"/>
<dbReference type="STRING" id="7227.FBpp0401490"/>
<dbReference type="MEROPS" id="S01.B31"/>
<dbReference type="GlyCosmos" id="A0A126GUP6">
    <property type="glycosylation" value="2 sites, No reported glycans"/>
</dbReference>
<dbReference type="GlyGen" id="A0A126GUP6">
    <property type="glycosylation" value="3 sites"/>
</dbReference>
<dbReference type="PaxDb" id="7227-FBpp0290158"/>
<dbReference type="DNASU" id="40541"/>
<dbReference type="EnsemblMetazoa" id="FBtr0078903">
    <molecule id="A0A126GUP6-2"/>
    <property type="protein sequence ID" value="FBpp0078543"/>
    <property type="gene ID" value="FBgn0027930"/>
</dbReference>
<dbReference type="EnsemblMetazoa" id="FBtr0300936">
    <molecule id="A0A126GUP6-3"/>
    <property type="protein sequence ID" value="FBpp0290158"/>
    <property type="gene ID" value="FBgn0027930"/>
</dbReference>
<dbReference type="EnsemblMetazoa" id="FBtr0445313">
    <molecule id="A0A126GUP6-1"/>
    <property type="protein sequence ID" value="FBpp0401490"/>
    <property type="gene ID" value="FBgn0027930"/>
</dbReference>
<dbReference type="GeneID" id="40541"/>
<dbReference type="KEGG" id="dme:Dmel_CG1102"/>
<dbReference type="UCSC" id="CG1102-RA">
    <property type="organism name" value="d. melanogaster"/>
</dbReference>
<dbReference type="AGR" id="FB:FBgn0027930"/>
<dbReference type="CTD" id="40541"/>
<dbReference type="FlyBase" id="FBgn0027930">
    <property type="gene designation" value="MP1"/>
</dbReference>
<dbReference type="VEuPathDB" id="VectorBase:FBgn0027930"/>
<dbReference type="eggNOG" id="KOG3627">
    <property type="taxonomic scope" value="Eukaryota"/>
</dbReference>
<dbReference type="GeneTree" id="ENSGT00940000163739"/>
<dbReference type="InParanoid" id="A0A126GUP6"/>
<dbReference type="OMA" id="DFISPVC"/>
<dbReference type="OrthoDB" id="9028152at2759"/>
<dbReference type="BioGRID-ORCS" id="40541">
    <property type="hits" value="0 hits in 1 CRISPR screen"/>
</dbReference>
<dbReference type="ChiTaRS" id="MP1">
    <property type="organism name" value="fly"/>
</dbReference>
<dbReference type="GenomeRNAi" id="40541"/>
<dbReference type="PRO" id="PR:A0A126GUP6"/>
<dbReference type="Proteomes" id="UP000000803">
    <property type="component" value="Chromosome 3R"/>
</dbReference>
<dbReference type="Bgee" id="FBgn0027930">
    <property type="expression patterns" value="Expressed in arthropod fat body and 14 other cell types or tissues"/>
</dbReference>
<dbReference type="ExpressionAtlas" id="A0A126GUP6">
    <property type="expression patterns" value="differential"/>
</dbReference>
<dbReference type="GO" id="GO:0005615">
    <property type="term" value="C:extracellular space"/>
    <property type="evidence" value="ECO:0000318"/>
    <property type="project" value="GO_Central"/>
</dbReference>
<dbReference type="GO" id="GO:0004175">
    <property type="term" value="F:endopeptidase activity"/>
    <property type="evidence" value="ECO:0000315"/>
    <property type="project" value="UniProtKB"/>
</dbReference>
<dbReference type="GO" id="GO:0046872">
    <property type="term" value="F:metal ion binding"/>
    <property type="evidence" value="ECO:0007669"/>
    <property type="project" value="UniProtKB-KW"/>
</dbReference>
<dbReference type="GO" id="GO:0017171">
    <property type="term" value="F:serine hydrolase activity"/>
    <property type="evidence" value="ECO:0007005"/>
    <property type="project" value="FlyBase"/>
</dbReference>
<dbReference type="GO" id="GO:0004252">
    <property type="term" value="F:serine-type endopeptidase activity"/>
    <property type="evidence" value="ECO:0000314"/>
    <property type="project" value="FlyBase"/>
</dbReference>
<dbReference type="GO" id="GO:0045087">
    <property type="term" value="P:innate immune response"/>
    <property type="evidence" value="ECO:0000318"/>
    <property type="project" value="GO_Central"/>
</dbReference>
<dbReference type="GO" id="GO:0035006">
    <property type="term" value="P:melanization defense response"/>
    <property type="evidence" value="ECO:0000315"/>
    <property type="project" value="FlyBase"/>
</dbReference>
<dbReference type="GO" id="GO:0006508">
    <property type="term" value="P:proteolysis"/>
    <property type="evidence" value="ECO:0000255"/>
    <property type="project" value="FlyBase"/>
</dbReference>
<dbReference type="GO" id="GO:0009620">
    <property type="term" value="P:response to fungus"/>
    <property type="evidence" value="ECO:0007007"/>
    <property type="project" value="FlyBase"/>
</dbReference>
<dbReference type="GO" id="GO:0160032">
    <property type="term" value="P:Toll receptor ligand protein activation cascade"/>
    <property type="evidence" value="ECO:0000314"/>
    <property type="project" value="FlyBase"/>
</dbReference>
<dbReference type="CDD" id="cd00190">
    <property type="entry name" value="Tryp_SPc"/>
    <property type="match status" value="1"/>
</dbReference>
<dbReference type="FunFam" id="2.40.10.10:FF:000028">
    <property type="entry name" value="Serine protease easter"/>
    <property type="match status" value="1"/>
</dbReference>
<dbReference type="FunFam" id="2.40.10.10:FF:000084">
    <property type="entry name" value="Serine protease easter"/>
    <property type="match status" value="1"/>
</dbReference>
<dbReference type="Gene3D" id="3.30.1640.30">
    <property type="match status" value="1"/>
</dbReference>
<dbReference type="Gene3D" id="2.40.10.10">
    <property type="entry name" value="Trypsin-like serine proteases"/>
    <property type="match status" value="2"/>
</dbReference>
<dbReference type="InterPro" id="IPR022700">
    <property type="entry name" value="CLIP"/>
</dbReference>
<dbReference type="InterPro" id="IPR038565">
    <property type="entry name" value="CLIP_sf"/>
</dbReference>
<dbReference type="InterPro" id="IPR009003">
    <property type="entry name" value="Peptidase_S1_PA"/>
</dbReference>
<dbReference type="InterPro" id="IPR043504">
    <property type="entry name" value="Peptidase_S1_PA_chymotrypsin"/>
</dbReference>
<dbReference type="InterPro" id="IPR001314">
    <property type="entry name" value="Peptidase_S1A"/>
</dbReference>
<dbReference type="InterPro" id="IPR051487">
    <property type="entry name" value="Ser/Thr_Proteases_Immune/Dev"/>
</dbReference>
<dbReference type="InterPro" id="IPR001254">
    <property type="entry name" value="Trypsin_dom"/>
</dbReference>
<dbReference type="InterPro" id="IPR018114">
    <property type="entry name" value="TRYPSIN_HIS"/>
</dbReference>
<dbReference type="InterPro" id="IPR033116">
    <property type="entry name" value="TRYPSIN_SER"/>
</dbReference>
<dbReference type="PANTHER" id="PTHR24256">
    <property type="entry name" value="TRYPTASE-RELATED"/>
    <property type="match status" value="1"/>
</dbReference>
<dbReference type="Pfam" id="PF12032">
    <property type="entry name" value="CLIP"/>
    <property type="match status" value="1"/>
</dbReference>
<dbReference type="Pfam" id="PF00089">
    <property type="entry name" value="Trypsin"/>
    <property type="match status" value="1"/>
</dbReference>
<dbReference type="PRINTS" id="PR00722">
    <property type="entry name" value="CHYMOTRYPSIN"/>
</dbReference>
<dbReference type="SMART" id="SM00680">
    <property type="entry name" value="CLIP"/>
    <property type="match status" value="1"/>
</dbReference>
<dbReference type="SMART" id="SM00020">
    <property type="entry name" value="Tryp_SPc"/>
    <property type="match status" value="1"/>
</dbReference>
<dbReference type="SUPFAM" id="SSF50494">
    <property type="entry name" value="Trypsin-like serine proteases"/>
    <property type="match status" value="1"/>
</dbReference>
<dbReference type="PROSITE" id="PS51888">
    <property type="entry name" value="CLIP"/>
    <property type="match status" value="1"/>
</dbReference>
<dbReference type="PROSITE" id="PS50240">
    <property type="entry name" value="TRYPSIN_DOM"/>
    <property type="match status" value="1"/>
</dbReference>
<dbReference type="PROSITE" id="PS00134">
    <property type="entry name" value="TRYPSIN_HIS"/>
    <property type="match status" value="1"/>
</dbReference>
<dbReference type="PROSITE" id="PS00135">
    <property type="entry name" value="TRYPSIN_SER"/>
    <property type="match status" value="1"/>
</dbReference>
<accession>A0A126GUP6</accession>
<accession>B7Z0T0</accession>
<accession>E8NHA1</accession>
<accession>Q9Y157</accession>
<sequence>MEPHFFFTVLWMLLMGTSSTYAQEIFGYCRTPDENSGTCINLRECGYLFELLQSEEVTEQDRRFLQASQCGYRNGQVLEKHFCFTNVQICCANSRMRNQQPQWGNHPQPTQTTKPTKRSGTKLLPMAPNCGENFGDRVVGGNETTKREFPWMALIEYTKPGNVKGHHCGGSLINHRYVLTAAHCVSAIPSDWELTGVRLGEWDASTNPDCTVGKNGRRDCNEPYVDYPVEERIPHPQYPGNSRDQLNDIALLRLRDEVQYSDFILPVCLPTLASQHNNIFLGRKVVVAGWGRTETNFTSNIKLKAELDTVPTSECNQRYATQRRTVTTKQMCAGGVEGVDSCRGDSGGPLLLEDYSNGNSNYYIAGVVSYGPTPCGLKGWPGVYTRVEAYLNWIENNVRA</sequence>
<evidence type="ECO:0000250" key="1">
    <source>
        <dbReference type="UniProtKB" id="O97366"/>
    </source>
</evidence>
<evidence type="ECO:0000250" key="2">
    <source>
        <dbReference type="UniProtKB" id="Q9V3Z2"/>
    </source>
</evidence>
<evidence type="ECO:0000250" key="3">
    <source>
        <dbReference type="UniProtKB" id="Q9VB68"/>
    </source>
</evidence>
<evidence type="ECO:0000255" key="4"/>
<evidence type="ECO:0000255" key="5">
    <source>
        <dbReference type="PROSITE-ProRule" id="PRU00274"/>
    </source>
</evidence>
<evidence type="ECO:0000255" key="6">
    <source>
        <dbReference type="PROSITE-ProRule" id="PRU00498"/>
    </source>
</evidence>
<evidence type="ECO:0000255" key="7">
    <source>
        <dbReference type="PROSITE-ProRule" id="PRU01236"/>
    </source>
</evidence>
<evidence type="ECO:0000256" key="8">
    <source>
        <dbReference type="SAM" id="MobiDB-lite"/>
    </source>
</evidence>
<evidence type="ECO:0000269" key="9">
    <source>
    </source>
</evidence>
<evidence type="ECO:0000269" key="10">
    <source>
    </source>
</evidence>
<evidence type="ECO:0000269" key="11">
    <source>
    </source>
</evidence>
<evidence type="ECO:0000303" key="12">
    <source>
    </source>
</evidence>
<evidence type="ECO:0000305" key="13"/>
<evidence type="ECO:0000305" key="14">
    <source>
    </source>
</evidence>
<evidence type="ECO:0000312" key="15">
    <source>
        <dbReference type="EMBL" id="AAD38586.1"/>
    </source>
</evidence>
<evidence type="ECO:0000312" key="16">
    <source>
        <dbReference type="EMBL" id="ADX35956.1"/>
    </source>
</evidence>
<evidence type="ECO:0000312" key="17">
    <source>
        <dbReference type="FlyBase" id="FBgn0027930"/>
    </source>
</evidence>
<evidence type="ECO:0000312" key="18">
    <source>
        <dbReference type="Proteomes" id="UP000000803"/>
    </source>
</evidence>
<gene>
    <name evidence="17" type="primary">MP1</name>
    <name evidence="17" type="ORF">CG1102</name>
</gene>
<proteinExistence type="evidence at protein level"/>